<reference key="1">
    <citation type="journal article" date="1996" name="Vaccine">
        <title>Identification of mutations contributing to the reduced virulence of a modified strain of respiratory syncytial virus.</title>
        <authorList>
            <person name="Tolley K.P."/>
            <person name="Marriott A.C."/>
            <person name="Simpson A."/>
            <person name="Plows D.J."/>
            <person name="Matthews D.A."/>
            <person name="Longhurst S.J."/>
            <person name="Evans J.E."/>
            <person name="Johnson J.L."/>
            <person name="Cane P.A."/>
            <person name="Easton A.J."/>
            <person name="Pringle C.R."/>
        </authorList>
    </citation>
    <scope>NUCLEOTIDE SEQUENCE [GENOMIC RNA]</scope>
</reference>
<protein>
    <recommendedName>
        <fullName>Matrix protein</fullName>
    </recommendedName>
    <alternativeName>
        <fullName evidence="1">M protein</fullName>
    </alternativeName>
</protein>
<proteinExistence type="inferred from homology"/>
<evidence type="ECO:0000250" key="1">
    <source>
        <dbReference type="UniProtKB" id="P0DOE7"/>
    </source>
</evidence>
<evidence type="ECO:0000305" key="2"/>
<dbReference type="EMBL" id="U39662">
    <property type="protein sequence ID" value="AAC57024.1"/>
    <property type="molecule type" value="Genomic_RNA"/>
</dbReference>
<dbReference type="SMR" id="P0DOE6"/>
<dbReference type="Proteomes" id="UP000113393">
    <property type="component" value="Genome"/>
</dbReference>
<dbReference type="GO" id="GO:0030430">
    <property type="term" value="C:host cell cytoplasm"/>
    <property type="evidence" value="ECO:0007669"/>
    <property type="project" value="UniProtKB-SubCell"/>
</dbReference>
<dbReference type="GO" id="GO:0042025">
    <property type="term" value="C:host cell nucleus"/>
    <property type="evidence" value="ECO:0007669"/>
    <property type="project" value="UniProtKB-SubCell"/>
</dbReference>
<dbReference type="GO" id="GO:0020002">
    <property type="term" value="C:host cell plasma membrane"/>
    <property type="evidence" value="ECO:0007669"/>
    <property type="project" value="UniProtKB-SubCell"/>
</dbReference>
<dbReference type="GO" id="GO:0016020">
    <property type="term" value="C:membrane"/>
    <property type="evidence" value="ECO:0007669"/>
    <property type="project" value="UniProtKB-KW"/>
</dbReference>
<dbReference type="GO" id="GO:0019031">
    <property type="term" value="C:viral envelope"/>
    <property type="evidence" value="ECO:0007669"/>
    <property type="project" value="InterPro"/>
</dbReference>
<dbReference type="GO" id="GO:0039660">
    <property type="term" value="F:structural constituent of virion"/>
    <property type="evidence" value="ECO:0007669"/>
    <property type="project" value="UniProtKB-KW"/>
</dbReference>
<dbReference type="GO" id="GO:0019068">
    <property type="term" value="P:virion assembly"/>
    <property type="evidence" value="ECO:0007669"/>
    <property type="project" value="InterPro"/>
</dbReference>
<dbReference type="Gene3D" id="2.70.20.30">
    <property type="entry name" value="HRSV-S2 matrix protein, N-terminal domain"/>
    <property type="match status" value="1"/>
</dbReference>
<dbReference type="InterPro" id="IPR055461">
    <property type="entry name" value="Matrix_Pneumo_C"/>
</dbReference>
<dbReference type="InterPro" id="IPR005056">
    <property type="entry name" value="MATRX_N_pneumovirus"/>
</dbReference>
<dbReference type="InterPro" id="IPR043062">
    <property type="entry name" value="Pneu_matrix_N"/>
</dbReference>
<dbReference type="Pfam" id="PF23766">
    <property type="entry name" value="Matrix_Pneumo_C"/>
    <property type="match status" value="1"/>
</dbReference>
<dbReference type="Pfam" id="PF03393">
    <property type="entry name" value="Matrix_Pneumo_N"/>
    <property type="match status" value="1"/>
</dbReference>
<sequence>METYVNKLHEGSTYTAAVQYNVLEKDDDPASLTIWVPMFQSSMPADLLIKELANVNILVKQISTPKGPSLRVMINSRSAVLAQMPSKFTICANVSLDERSKLAYDVTTPCEIKACSLTCLKSKNMLTTVKDLTMKTLNPTHDIIALCEFENIVTSKKVIIPTYLRSISVRNKDLNTLENITTTEFKNAITNAKIIPYSGLLLVITVTDNKGAFKYIKPQSQFIVDLGAYLEKESIYYVTTNWKHTATRFAIKPMED</sequence>
<feature type="chain" id="PRO_0000439633" description="Matrix protein">
    <location>
        <begin position="1"/>
        <end position="256"/>
    </location>
</feature>
<feature type="region of interest" description="Interaction with M2-1" evidence="1">
    <location>
        <begin position="1"/>
        <end position="110"/>
    </location>
</feature>
<feature type="region of interest" description="Nuclear targeting and binding to host importin KPNB1" evidence="1">
    <location>
        <begin position="110"/>
        <end position="183"/>
    </location>
</feature>
<feature type="short sequence motif" description="Nuclear export signal" evidence="1">
    <location>
        <begin position="194"/>
        <end position="206"/>
    </location>
</feature>
<feature type="modified residue" description="Phosphothreonine" evidence="1">
    <location>
        <position position="205"/>
    </location>
</feature>
<name>MATRX_HRSS2</name>
<organism>
    <name type="scientific">Human respiratory syncytial virus A (strain S-2)</name>
    <name type="common">HRSV-S2</name>
    <dbReference type="NCBI Taxonomy" id="410078"/>
    <lineage>
        <taxon>Viruses</taxon>
        <taxon>Riboviria</taxon>
        <taxon>Orthornavirae</taxon>
        <taxon>Negarnaviricota</taxon>
        <taxon>Haploviricotina</taxon>
        <taxon>Monjiviricetes</taxon>
        <taxon>Mononegavirales</taxon>
        <taxon>Pneumoviridae</taxon>
        <taxon>Orthopneumovirus</taxon>
        <taxon>Orthopneumovirus hominis</taxon>
    </lineage>
</organism>
<gene>
    <name type="primary">M</name>
</gene>
<comment type="function">
    <text evidence="1">Plays a crucial role in virus assembly into filaments and budding. Early in infection, localizes in the nucleus where it may inhibit host cell transcription. Later in infection, traffics to the cytoplasm through the action of host CRM1 to associate with inclusion bodies, the site of viral transcription and replication. During virus assembly and budding, acts as a bridge between the nucleocapsid and the lipid bilayer. Also plays a role in the inhibition of host interferon-beta response in a RACK1-dependent manner.</text>
</comment>
<comment type="subunit">
    <text evidence="1">Forms dimers. Forms higher-order oligomers. Interacts with glycoprotein G (via N-terminus). Interacts with protein M2-1; this interaction directs the matrix protein localization to cytoplasmic inclusions comprising viral proteins L, N, P, and M2-1 and mediates the matrix protein association with the nucleocapsid. Interacts with host KPNB1; this interaction mediates nuclear import of the matrix protein early during infection. Interacts with host AP3M1; this interaction plays an essential role in trafficking the matrix protein in host cells. Interacts with host CAV1; this interaction probably facilitates viral budding. Interacts with host CFL1; this interaction probably facilitates viral replication. Interacts with host ZNF502; this interaction probably facilitates viral release. Interacts with host RACK1.</text>
</comment>
<comment type="subcellular location">
    <subcellularLocation>
        <location evidence="1">Virion</location>
    </subcellularLocation>
    <subcellularLocation>
        <location evidence="1">Host cytoplasm</location>
    </subcellularLocation>
    <subcellularLocation>
        <location evidence="1">Host nucleus</location>
    </subcellularLocation>
    <subcellularLocation>
        <location evidence="1">Host cell membrane</location>
        <topology evidence="1">Peripheral membrane protein</topology>
        <orientation evidence="1">Cytoplasmic side</orientation>
    </subcellularLocation>
    <text evidence="1">In the cytoplasm, associates with inclusion bodies. During bud formation, associates at the inner side of the plasma membrane of infected cells.</text>
</comment>
<comment type="PTM">
    <text evidence="1">Phosphorylation is important for oligomerization.</text>
</comment>
<comment type="similarity">
    <text evidence="2">Belongs to the pneumovirinae M protein family.</text>
</comment>
<keyword id="KW-1032">Host cell membrane</keyword>
<keyword id="KW-1035">Host cytoplasm</keyword>
<keyword id="KW-1043">Host membrane</keyword>
<keyword id="KW-1048">Host nucleus</keyword>
<keyword id="KW-0945">Host-virus interaction</keyword>
<keyword id="KW-0472">Membrane</keyword>
<keyword id="KW-0597">Phosphoprotein</keyword>
<keyword id="KW-0468">Viral matrix protein</keyword>
<keyword id="KW-0946">Virion</keyword>
<organismHost>
    <name type="scientific">Homo sapiens</name>
    <name type="common">Human</name>
    <dbReference type="NCBI Taxonomy" id="9606"/>
</organismHost>
<accession>P0DOE6</accession>
<accession>P03419</accession>
<accession>Q77YB3</accession>